<protein>
    <recommendedName>
        <fullName>Ras-related protein Rab-27A</fullName>
        <ecNumber evidence="2">3.6.5.2</ecNumber>
    </recommendedName>
</protein>
<organism>
    <name type="scientific">Canis lupus familiaris</name>
    <name type="common">Dog</name>
    <name type="synonym">Canis familiaris</name>
    <dbReference type="NCBI Taxonomy" id="9615"/>
    <lineage>
        <taxon>Eukaryota</taxon>
        <taxon>Metazoa</taxon>
        <taxon>Chordata</taxon>
        <taxon>Craniata</taxon>
        <taxon>Vertebrata</taxon>
        <taxon>Euteleostomi</taxon>
        <taxon>Mammalia</taxon>
        <taxon>Eutheria</taxon>
        <taxon>Laurasiatheria</taxon>
        <taxon>Carnivora</taxon>
        <taxon>Caniformia</taxon>
        <taxon>Canidae</taxon>
        <taxon>Canis</taxon>
    </lineage>
</organism>
<proteinExistence type="evidence at transcript level"/>
<evidence type="ECO:0000250" key="1"/>
<evidence type="ECO:0000250" key="2">
    <source>
        <dbReference type="UniProtKB" id="P51159"/>
    </source>
</evidence>
<evidence type="ECO:0000250" key="3">
    <source>
        <dbReference type="UniProtKB" id="Q9ERI2"/>
    </source>
</evidence>
<evidence type="ECO:0000305" key="4"/>
<feature type="initiator methionine" description="Removed" evidence="2">
    <location>
        <position position="1"/>
    </location>
</feature>
<feature type="chain" id="PRO_0000252359" description="Ras-related protein Rab-27A">
    <location>
        <begin position="2"/>
        <end position="221"/>
    </location>
</feature>
<feature type="short sequence motif" description="Effector region" evidence="1">
    <location>
        <begin position="38"/>
        <end position="46"/>
    </location>
</feature>
<feature type="binding site" evidence="1">
    <location>
        <begin position="16"/>
        <end position="24"/>
    </location>
    <ligand>
        <name>GTP</name>
        <dbReference type="ChEBI" id="CHEBI:37565"/>
    </ligand>
</feature>
<feature type="binding site" evidence="1">
    <location>
        <begin position="74"/>
        <end position="78"/>
    </location>
    <ligand>
        <name>GTP</name>
        <dbReference type="ChEBI" id="CHEBI:37565"/>
    </ligand>
</feature>
<feature type="binding site" evidence="1">
    <location>
        <begin position="133"/>
        <end position="136"/>
    </location>
    <ligand>
        <name>GTP</name>
        <dbReference type="ChEBI" id="CHEBI:37565"/>
    </ligand>
</feature>
<feature type="binding site" evidence="1">
    <location>
        <begin position="163"/>
        <end position="165"/>
    </location>
    <ligand>
        <name>GTP</name>
        <dbReference type="ChEBI" id="CHEBI:37565"/>
    </ligand>
</feature>
<feature type="modified residue" description="N-acetylserine" evidence="2">
    <location>
        <position position="2"/>
    </location>
</feature>
<feature type="modified residue" description="Phosphoserine" evidence="2">
    <location>
        <position position="2"/>
    </location>
</feature>
<feature type="modified residue" description="Cysteine methyl ester" evidence="1">
    <location>
        <position position="221"/>
    </location>
</feature>
<feature type="lipid moiety-binding region" description="S-geranylgeranyl cysteine" evidence="1">
    <location>
        <position position="219"/>
    </location>
</feature>
<feature type="lipid moiety-binding region" description="S-geranylgeranyl cysteine" evidence="1">
    <location>
        <position position="221"/>
    </location>
</feature>
<feature type="disulfide bond" evidence="1">
    <location>
        <begin position="123"/>
        <end position="188"/>
    </location>
</feature>
<reference key="1">
    <citation type="submission" date="2006-04" db="EMBL/GenBank/DDBJ databases">
        <title>Association of an MLPH allele with dilute coat colors in domestic dogs.</title>
        <authorList>
            <person name="Schmutz S.M."/>
            <person name="Berryere T.G."/>
            <person name="Philipp U."/>
            <person name="Dreger D."/>
            <person name="Leeb T."/>
        </authorList>
    </citation>
    <scope>NUCLEOTIDE SEQUENCE [MRNA]</scope>
    <source>
        <strain>Large Munsterlander</strain>
        <tissue>Skin</tissue>
    </source>
</reference>
<sequence>MSDGDYDYLIKFLALGDSGVGKTSVLYQYTDGKFNSKFITTVGIDFREKRVVYRANGPDGAIGRGQRIHLQLWDTAGQERFRSLTTAFFRDAMGFLLLFDLTNEQSFLNVRNWISQLQMHAYCENPDIVLCGNKSDLEDQRVVKEEDARGLAEKYGIPYFETSAANGTNISQAIEMLLDLIMKRMERCVDKSWIPEGVVRSNGHTSTDHLNEAKEKGICGC</sequence>
<comment type="function">
    <text evidence="2">Small GTPase which cycles between active GTP-bound and inactive GDP-bound states. In its active state, binds to a variety of effector proteins to regulate homeostasis of late endocytic pathway, including endosomal positioning, maturation and secretion. Plays a role in cytotoxic granule exocytosis in lymphocytes. Required for both granule maturation and granule docking and priming at the immunologic synapse.</text>
</comment>
<comment type="catalytic activity">
    <reaction evidence="2">
        <text>GTP + H2O = GDP + phosphate + H(+)</text>
        <dbReference type="Rhea" id="RHEA:19669"/>
        <dbReference type="ChEBI" id="CHEBI:15377"/>
        <dbReference type="ChEBI" id="CHEBI:15378"/>
        <dbReference type="ChEBI" id="CHEBI:37565"/>
        <dbReference type="ChEBI" id="CHEBI:43474"/>
        <dbReference type="ChEBI" id="CHEBI:58189"/>
        <dbReference type="EC" id="3.6.5.2"/>
    </reaction>
    <physiologicalReaction direction="left-to-right" evidence="2">
        <dbReference type="Rhea" id="RHEA:19670"/>
    </physiologicalReaction>
</comment>
<comment type="activity regulation">
    <text evidence="2">Regulated by guanine nucleotide exchange factors (GEFs) which promote the exchange of bound GDP for free GTP, GTPase activating proteins (GAPs) which increase the GTP hydrolysis activity, and GDP dissociation inhibitors which inhibit the dissociation of the nucleotide from the GTPase. Activated by GEFs such as DENND10.</text>
</comment>
<comment type="subunit">
    <text evidence="2 3">Binds SYTL1, SLAC2B, MYRIP, SYTL3, SYTL4 and SYTL5. Interacts with RPH3A and RPH3A (By similarity). Binds MLPH and SYTL2. Interacts with UNC13D. Does not interact with the BLOC-3 complex (heterodimer of HPS1 and HPS4) (By similarity). Interacts (GDP-bound form preferentially) with DENND10 (By similarity).</text>
</comment>
<comment type="subcellular location">
    <subcellularLocation>
        <location evidence="2">Membrane</location>
        <topology evidence="2">Lipid-anchor</topology>
    </subcellularLocation>
    <subcellularLocation>
        <location evidence="2">Melanosome</location>
    </subcellularLocation>
    <subcellularLocation>
        <location evidence="2">Late endosome</location>
    </subcellularLocation>
    <subcellularLocation>
        <location evidence="2">Lysosome</location>
    </subcellularLocation>
    <text evidence="2">Identified by mass spectrometry in melanosome fractions from stage I to stage IV. Localizes to endosomal exocytic vesicles.</text>
</comment>
<comment type="similarity">
    <text evidence="4">Belongs to the small GTPase superfamily. Rab family.</text>
</comment>
<gene>
    <name type="primary">RAB27A</name>
</gene>
<keyword id="KW-0007">Acetylation</keyword>
<keyword id="KW-1015">Disulfide bond</keyword>
<keyword id="KW-0967">Endosome</keyword>
<keyword id="KW-0268">Exocytosis</keyword>
<keyword id="KW-0342">GTP-binding</keyword>
<keyword id="KW-0378">Hydrolase</keyword>
<keyword id="KW-0449">Lipoprotein</keyword>
<keyword id="KW-0458">Lysosome</keyword>
<keyword id="KW-0472">Membrane</keyword>
<keyword id="KW-0488">Methylation</keyword>
<keyword id="KW-0547">Nucleotide-binding</keyword>
<keyword id="KW-0597">Phosphoprotein</keyword>
<keyword id="KW-0636">Prenylation</keyword>
<keyword id="KW-1185">Reference proteome</keyword>
<name>RB27A_CANLF</name>
<accession>Q1HE58</accession>
<dbReference type="EC" id="3.6.5.2" evidence="2"/>
<dbReference type="EMBL" id="DQ494380">
    <property type="protein sequence ID" value="ABF50191.1"/>
    <property type="molecule type" value="mRNA"/>
</dbReference>
<dbReference type="RefSeq" id="NP_001041595.1">
    <property type="nucleotide sequence ID" value="NM_001048130.1"/>
</dbReference>
<dbReference type="RefSeq" id="XP_005638237.1">
    <property type="nucleotide sequence ID" value="XM_005638180.2"/>
</dbReference>
<dbReference type="RefSeq" id="XP_005638238.1">
    <property type="nucleotide sequence ID" value="XM_005638181.2"/>
</dbReference>
<dbReference type="RefSeq" id="XP_038297674.1">
    <property type="nucleotide sequence ID" value="XM_038441746.1"/>
</dbReference>
<dbReference type="RefSeq" id="XP_038297675.1">
    <property type="nucleotide sequence ID" value="XM_038441747.1"/>
</dbReference>
<dbReference type="RefSeq" id="XP_038297676.1">
    <property type="nucleotide sequence ID" value="XM_038441748.1"/>
</dbReference>
<dbReference type="SMR" id="Q1HE58"/>
<dbReference type="FunCoup" id="Q1HE58">
    <property type="interactions" value="568"/>
</dbReference>
<dbReference type="STRING" id="9615.ENSCAFP00000023411"/>
<dbReference type="PaxDb" id="9612-ENSCAFP00000023411"/>
<dbReference type="Ensembl" id="ENSCAFT00000025219.4">
    <property type="protein sequence ID" value="ENSCAFP00000023411.2"/>
    <property type="gene ID" value="ENSCAFG00000015916.6"/>
</dbReference>
<dbReference type="Ensembl" id="ENSCAFT00030029077.1">
    <property type="protein sequence ID" value="ENSCAFP00030025349.1"/>
    <property type="gene ID" value="ENSCAFG00030015797.1"/>
</dbReference>
<dbReference type="Ensembl" id="ENSCAFT00040047724.1">
    <property type="protein sequence ID" value="ENSCAFP00040041663.1"/>
    <property type="gene ID" value="ENSCAFG00040025570.1"/>
</dbReference>
<dbReference type="Ensembl" id="ENSCAFT00845050349.1">
    <property type="protein sequence ID" value="ENSCAFP00845039475.1"/>
    <property type="gene ID" value="ENSCAFG00845028531.1"/>
</dbReference>
<dbReference type="GeneID" id="608699"/>
<dbReference type="KEGG" id="cfa:608699"/>
<dbReference type="CTD" id="5873"/>
<dbReference type="VEuPathDB" id="HostDB:ENSCAFG00845028531"/>
<dbReference type="VGNC" id="VGNC:45267">
    <property type="gene designation" value="RAB27A"/>
</dbReference>
<dbReference type="eggNOG" id="KOG0081">
    <property type="taxonomic scope" value="Eukaryota"/>
</dbReference>
<dbReference type="GeneTree" id="ENSGT00940000156218"/>
<dbReference type="HOGENOM" id="CLU_041217_10_1_1"/>
<dbReference type="InParanoid" id="Q1HE58"/>
<dbReference type="OMA" id="MHAYTED"/>
<dbReference type="OrthoDB" id="9989112at2759"/>
<dbReference type="TreeFam" id="TF312895"/>
<dbReference type="Reactome" id="R-CFA-6798695">
    <property type="pathway name" value="Neutrophil degranulation"/>
</dbReference>
<dbReference type="Reactome" id="R-CFA-8873719">
    <property type="pathway name" value="RAB geranylgeranylation"/>
</dbReference>
<dbReference type="Reactome" id="R-CFA-8876198">
    <property type="pathway name" value="RAB GEFs exchange GTP for GDP on RABs"/>
</dbReference>
<dbReference type="Reactome" id="R-CFA-9824585">
    <property type="pathway name" value="Regulation of MITF-M-dependent genes involved in pigmentation"/>
</dbReference>
<dbReference type="Proteomes" id="UP000002254">
    <property type="component" value="Chromosome 30"/>
</dbReference>
<dbReference type="Proteomes" id="UP000694429">
    <property type="component" value="Chromosome 30"/>
</dbReference>
<dbReference type="Proteomes" id="UP000694542">
    <property type="component" value="Chromosome 30"/>
</dbReference>
<dbReference type="Proteomes" id="UP000805418">
    <property type="component" value="Chromosome 30"/>
</dbReference>
<dbReference type="Bgee" id="ENSCAFG00000015916">
    <property type="expression patterns" value="Expressed in granulocyte and 46 other cell types or tissues"/>
</dbReference>
<dbReference type="GO" id="GO:0016324">
    <property type="term" value="C:apical plasma membrane"/>
    <property type="evidence" value="ECO:0000318"/>
    <property type="project" value="GO_Central"/>
</dbReference>
<dbReference type="GO" id="GO:0030425">
    <property type="term" value="C:dendrite"/>
    <property type="evidence" value="ECO:0007669"/>
    <property type="project" value="Ensembl"/>
</dbReference>
<dbReference type="GO" id="GO:0070382">
    <property type="term" value="C:exocytic vesicle"/>
    <property type="evidence" value="ECO:0000318"/>
    <property type="project" value="GO_Central"/>
</dbReference>
<dbReference type="GO" id="GO:0005794">
    <property type="term" value="C:Golgi apparatus"/>
    <property type="evidence" value="ECO:0000318"/>
    <property type="project" value="GO_Central"/>
</dbReference>
<dbReference type="GO" id="GO:0005770">
    <property type="term" value="C:late endosome"/>
    <property type="evidence" value="ECO:0000250"/>
    <property type="project" value="UniProtKB"/>
</dbReference>
<dbReference type="GO" id="GO:0005764">
    <property type="term" value="C:lysosome"/>
    <property type="evidence" value="ECO:0007669"/>
    <property type="project" value="UniProtKB-SubCell"/>
</dbReference>
<dbReference type="GO" id="GO:0042470">
    <property type="term" value="C:melanosome"/>
    <property type="evidence" value="ECO:0000318"/>
    <property type="project" value="GO_Central"/>
</dbReference>
<dbReference type="GO" id="GO:0032585">
    <property type="term" value="C:multivesicular body membrane"/>
    <property type="evidence" value="ECO:0007669"/>
    <property type="project" value="Ensembl"/>
</dbReference>
<dbReference type="GO" id="GO:0001750">
    <property type="term" value="C:photoreceptor outer segment"/>
    <property type="evidence" value="ECO:0007669"/>
    <property type="project" value="Ensembl"/>
</dbReference>
<dbReference type="GO" id="GO:0030141">
    <property type="term" value="C:secretory granule"/>
    <property type="evidence" value="ECO:0000318"/>
    <property type="project" value="GO_Central"/>
</dbReference>
<dbReference type="GO" id="GO:0003925">
    <property type="term" value="F:G protein activity"/>
    <property type="evidence" value="ECO:0007669"/>
    <property type="project" value="UniProtKB-EC"/>
</dbReference>
<dbReference type="GO" id="GO:0019003">
    <property type="term" value="F:GDP binding"/>
    <property type="evidence" value="ECO:0000250"/>
    <property type="project" value="UniProtKB"/>
</dbReference>
<dbReference type="GO" id="GO:0005525">
    <property type="term" value="F:GTP binding"/>
    <property type="evidence" value="ECO:0000250"/>
    <property type="project" value="UniProtKB"/>
</dbReference>
<dbReference type="GO" id="GO:0003924">
    <property type="term" value="F:GTPase activity"/>
    <property type="evidence" value="ECO:0000250"/>
    <property type="project" value="UniProtKB"/>
</dbReference>
<dbReference type="GO" id="GO:0031489">
    <property type="term" value="F:myosin V binding"/>
    <property type="evidence" value="ECO:0007669"/>
    <property type="project" value="Ensembl"/>
</dbReference>
<dbReference type="GO" id="GO:0019882">
    <property type="term" value="P:antigen processing and presentation"/>
    <property type="evidence" value="ECO:0007669"/>
    <property type="project" value="Ensembl"/>
</dbReference>
<dbReference type="GO" id="GO:0007596">
    <property type="term" value="P:blood coagulation"/>
    <property type="evidence" value="ECO:0007669"/>
    <property type="project" value="Ensembl"/>
</dbReference>
<dbReference type="GO" id="GO:0097278">
    <property type="term" value="P:complement-dependent cytotoxicity"/>
    <property type="evidence" value="ECO:0007669"/>
    <property type="project" value="Ensembl"/>
</dbReference>
<dbReference type="GO" id="GO:0043316">
    <property type="term" value="P:cytotoxic T cell degranulation"/>
    <property type="evidence" value="ECO:0007669"/>
    <property type="project" value="Ensembl"/>
</dbReference>
<dbReference type="GO" id="GO:0006887">
    <property type="term" value="P:exocytosis"/>
    <property type="evidence" value="ECO:0000318"/>
    <property type="project" value="GO_Central"/>
</dbReference>
<dbReference type="GO" id="GO:1990182">
    <property type="term" value="P:exosomal secretion"/>
    <property type="evidence" value="ECO:0007669"/>
    <property type="project" value="Ensembl"/>
</dbReference>
<dbReference type="GO" id="GO:0030318">
    <property type="term" value="P:melanocyte differentiation"/>
    <property type="evidence" value="ECO:0007669"/>
    <property type="project" value="Ensembl"/>
</dbReference>
<dbReference type="GO" id="GO:0032402">
    <property type="term" value="P:melanosome transport"/>
    <property type="evidence" value="ECO:0007669"/>
    <property type="project" value="Ensembl"/>
</dbReference>
<dbReference type="GO" id="GO:0036257">
    <property type="term" value="P:multivesicular body organization"/>
    <property type="evidence" value="ECO:0007669"/>
    <property type="project" value="Ensembl"/>
</dbReference>
<dbReference type="GO" id="GO:0071985">
    <property type="term" value="P:multivesicular body sorting pathway"/>
    <property type="evidence" value="ECO:0007669"/>
    <property type="project" value="Ensembl"/>
</dbReference>
<dbReference type="GO" id="GO:0043320">
    <property type="term" value="P:natural killer cell degranulation"/>
    <property type="evidence" value="ECO:0007669"/>
    <property type="project" value="Ensembl"/>
</dbReference>
<dbReference type="GO" id="GO:1903435">
    <property type="term" value="P:positive regulation of constitutive secretory pathway"/>
    <property type="evidence" value="ECO:0007669"/>
    <property type="project" value="Ensembl"/>
</dbReference>
<dbReference type="GO" id="GO:0045921">
    <property type="term" value="P:positive regulation of exocytosis"/>
    <property type="evidence" value="ECO:0000318"/>
    <property type="project" value="GO_Central"/>
</dbReference>
<dbReference type="GO" id="GO:0010628">
    <property type="term" value="P:positive regulation of gene expression"/>
    <property type="evidence" value="ECO:0007669"/>
    <property type="project" value="Ensembl"/>
</dbReference>
<dbReference type="GO" id="GO:0050766">
    <property type="term" value="P:positive regulation of phagocytosis"/>
    <property type="evidence" value="ECO:0007669"/>
    <property type="project" value="Ensembl"/>
</dbReference>
<dbReference type="GO" id="GO:1903428">
    <property type="term" value="P:positive regulation of reactive oxygen species biosynthetic process"/>
    <property type="evidence" value="ECO:0007669"/>
    <property type="project" value="Ensembl"/>
</dbReference>
<dbReference type="GO" id="GO:1903307">
    <property type="term" value="P:positive regulation of regulated secretory pathway"/>
    <property type="evidence" value="ECO:0007669"/>
    <property type="project" value="Ensembl"/>
</dbReference>
<dbReference type="GO" id="GO:0009306">
    <property type="term" value="P:protein secretion"/>
    <property type="evidence" value="ECO:0007669"/>
    <property type="project" value="Ensembl"/>
</dbReference>
<dbReference type="CDD" id="cd04127">
    <property type="entry name" value="Rab27A"/>
    <property type="match status" value="1"/>
</dbReference>
<dbReference type="FunFam" id="3.40.50.300:FF:000402">
    <property type="entry name" value="Ras-related protein Rab-27A"/>
    <property type="match status" value="1"/>
</dbReference>
<dbReference type="Gene3D" id="3.40.50.300">
    <property type="entry name" value="P-loop containing nucleotide triphosphate hydrolases"/>
    <property type="match status" value="1"/>
</dbReference>
<dbReference type="InterPro" id="IPR027417">
    <property type="entry name" value="P-loop_NTPase"/>
</dbReference>
<dbReference type="InterPro" id="IPR041837">
    <property type="entry name" value="Rab27a/b"/>
</dbReference>
<dbReference type="InterPro" id="IPR005225">
    <property type="entry name" value="Small_GTP-bd"/>
</dbReference>
<dbReference type="InterPro" id="IPR001806">
    <property type="entry name" value="Small_GTPase"/>
</dbReference>
<dbReference type="InterPro" id="IPR050305">
    <property type="entry name" value="Small_GTPase_Rab"/>
</dbReference>
<dbReference type="NCBIfam" id="TIGR00231">
    <property type="entry name" value="small_GTP"/>
    <property type="match status" value="1"/>
</dbReference>
<dbReference type="PANTHER" id="PTHR47980">
    <property type="entry name" value="LD44762P"/>
    <property type="match status" value="1"/>
</dbReference>
<dbReference type="Pfam" id="PF00071">
    <property type="entry name" value="Ras"/>
    <property type="match status" value="1"/>
</dbReference>
<dbReference type="PRINTS" id="PR00449">
    <property type="entry name" value="RASTRNSFRMNG"/>
</dbReference>
<dbReference type="SMART" id="SM00175">
    <property type="entry name" value="RAB"/>
    <property type="match status" value="1"/>
</dbReference>
<dbReference type="SMART" id="SM00176">
    <property type="entry name" value="RAN"/>
    <property type="match status" value="1"/>
</dbReference>
<dbReference type="SMART" id="SM00173">
    <property type="entry name" value="RAS"/>
    <property type="match status" value="1"/>
</dbReference>
<dbReference type="SMART" id="SM00174">
    <property type="entry name" value="RHO"/>
    <property type="match status" value="1"/>
</dbReference>
<dbReference type="SUPFAM" id="SSF52540">
    <property type="entry name" value="P-loop containing nucleoside triphosphate hydrolases"/>
    <property type="match status" value="1"/>
</dbReference>
<dbReference type="PROSITE" id="PS51419">
    <property type="entry name" value="RAB"/>
    <property type="match status" value="1"/>
</dbReference>